<proteinExistence type="inferred from homology"/>
<comment type="function">
    <text evidence="1">Acts as a Ras effector and participates in MAPK pathway activation. Probably acts as a regulatory subunit of protein phosphatase that specifically dephosphorylates Raf kinase and stimulate Raf activity at specialized signaling complexes upon Ras activation (By similarity).</text>
</comment>
<comment type="similarity">
    <text evidence="3">Belongs to the SHOC2 family.</text>
</comment>
<name>SUR8_DROYA</name>
<accession>B4PU77</accession>
<reference key="1">
    <citation type="journal article" date="2007" name="Nature">
        <title>Evolution of genes and genomes on the Drosophila phylogeny.</title>
        <authorList>
            <consortium name="Drosophila 12 genomes consortium"/>
        </authorList>
    </citation>
    <scope>NUCLEOTIDE SEQUENCE [LARGE SCALE GENOMIC DNA]</scope>
    <source>
        <strain>Tai18E2 / Tucson 14021-0261.01</strain>
    </source>
</reference>
<dbReference type="EMBL" id="CM000160">
    <property type="protein sequence ID" value="EDW97727.1"/>
    <property type="molecule type" value="Genomic_DNA"/>
</dbReference>
<dbReference type="RefSeq" id="XP_002098015.2">
    <property type="nucleotide sequence ID" value="XM_002097979.2"/>
</dbReference>
<dbReference type="SMR" id="B4PU77"/>
<dbReference type="EnsemblMetazoa" id="FBtr0270688">
    <property type="protein sequence ID" value="FBpp0269180"/>
    <property type="gene ID" value="FBgn0241301"/>
</dbReference>
<dbReference type="EnsemblMetazoa" id="XM_002097979.3">
    <property type="protein sequence ID" value="XP_002098015.3"/>
    <property type="gene ID" value="LOC6537459"/>
</dbReference>
<dbReference type="GeneID" id="6537459"/>
<dbReference type="KEGG" id="dya:Dyak_GE24170"/>
<dbReference type="CTD" id="42093"/>
<dbReference type="eggNOG" id="KOG0619">
    <property type="taxonomic scope" value="Eukaryota"/>
</dbReference>
<dbReference type="HOGENOM" id="CLU_000288_18_23_1"/>
<dbReference type="OMA" id="NQFTSYP"/>
<dbReference type="OrthoDB" id="676979at2759"/>
<dbReference type="PhylomeDB" id="B4PU77"/>
<dbReference type="ChiTaRS" id="Sur-8">
    <property type="organism name" value="fly"/>
</dbReference>
<dbReference type="Proteomes" id="UP000002282">
    <property type="component" value="Chromosome 3R"/>
</dbReference>
<dbReference type="FunFam" id="3.80.10.10:FF:000031">
    <property type="entry name" value="leucine-rich repeat protein SHOC-2"/>
    <property type="match status" value="1"/>
</dbReference>
<dbReference type="FunFam" id="3.80.10.10:FF:000115">
    <property type="entry name" value="leucine-rich repeat protein SHOC-2"/>
    <property type="match status" value="1"/>
</dbReference>
<dbReference type="FunFam" id="3.80.10.10:FF:000281">
    <property type="entry name" value="Leucine-rich repeat protein soc-2"/>
    <property type="match status" value="1"/>
</dbReference>
<dbReference type="FunFam" id="3.80.10.10:FF:000450">
    <property type="entry name" value="Leucine-rich repeat protein soc-2"/>
    <property type="match status" value="1"/>
</dbReference>
<dbReference type="Gene3D" id="3.80.10.10">
    <property type="entry name" value="Ribonuclease Inhibitor"/>
    <property type="match status" value="4"/>
</dbReference>
<dbReference type="InterPro" id="IPR001611">
    <property type="entry name" value="Leu-rich_rpt"/>
</dbReference>
<dbReference type="InterPro" id="IPR003591">
    <property type="entry name" value="Leu-rich_rpt_typical-subtyp"/>
</dbReference>
<dbReference type="InterPro" id="IPR050715">
    <property type="entry name" value="LRR-SigEffector_domain"/>
</dbReference>
<dbReference type="InterPro" id="IPR032675">
    <property type="entry name" value="LRR_dom_sf"/>
</dbReference>
<dbReference type="InterPro" id="IPR055414">
    <property type="entry name" value="LRR_R13L4/SHOC2-like"/>
</dbReference>
<dbReference type="PANTHER" id="PTHR45752:SF187">
    <property type="entry name" value="LEUCINE-RICH REPEAT AND IQ DOMAIN-CONTAINING PROTEIN 4"/>
    <property type="match status" value="1"/>
</dbReference>
<dbReference type="PANTHER" id="PTHR45752">
    <property type="entry name" value="LEUCINE-RICH REPEAT-CONTAINING"/>
    <property type="match status" value="1"/>
</dbReference>
<dbReference type="Pfam" id="PF00560">
    <property type="entry name" value="LRR_1"/>
    <property type="match status" value="1"/>
</dbReference>
<dbReference type="Pfam" id="PF23598">
    <property type="entry name" value="LRR_14"/>
    <property type="match status" value="2"/>
</dbReference>
<dbReference type="Pfam" id="PF13855">
    <property type="entry name" value="LRR_8"/>
    <property type="match status" value="1"/>
</dbReference>
<dbReference type="SMART" id="SM00364">
    <property type="entry name" value="LRR_BAC"/>
    <property type="match status" value="10"/>
</dbReference>
<dbReference type="SMART" id="SM00365">
    <property type="entry name" value="LRR_SD22"/>
    <property type="match status" value="7"/>
</dbReference>
<dbReference type="SMART" id="SM00369">
    <property type="entry name" value="LRR_TYP"/>
    <property type="match status" value="15"/>
</dbReference>
<dbReference type="SUPFAM" id="SSF52058">
    <property type="entry name" value="L domain-like"/>
    <property type="match status" value="2"/>
</dbReference>
<dbReference type="PROSITE" id="PS51450">
    <property type="entry name" value="LRR"/>
    <property type="match status" value="18"/>
</dbReference>
<gene>
    <name type="primary">Sur-8</name>
    <name type="ORF">GE24170</name>
</gene>
<protein>
    <recommendedName>
        <fullName>Leucine-rich repeat protein soc-2 homolog</fullName>
    </recommendedName>
    <alternativeName>
        <fullName>Protein Sur-8 homolog</fullName>
    </alternativeName>
    <alternativeName>
        <fullName>Protein soc-2 homolog</fullName>
    </alternativeName>
</protein>
<keyword id="KW-0433">Leucine-rich repeat</keyword>
<keyword id="KW-0677">Repeat</keyword>
<evidence type="ECO:0000250" key="1"/>
<evidence type="ECO:0000256" key="2">
    <source>
        <dbReference type="SAM" id="MobiDB-lite"/>
    </source>
</evidence>
<evidence type="ECO:0000305" key="3"/>
<feature type="chain" id="PRO_0000385643" description="Leucine-rich repeat protein soc-2 homolog">
    <location>
        <begin position="1"/>
        <end position="645"/>
    </location>
</feature>
<feature type="repeat" description="LRR 1">
    <location>
        <begin position="165"/>
        <end position="186"/>
    </location>
</feature>
<feature type="repeat" description="LRR 2">
    <location>
        <begin position="188"/>
        <end position="209"/>
    </location>
</feature>
<feature type="repeat" description="LRR 3">
    <location>
        <begin position="211"/>
        <end position="232"/>
    </location>
</feature>
<feature type="repeat" description="LRR 4">
    <location>
        <begin position="234"/>
        <end position="255"/>
    </location>
</feature>
<feature type="repeat" description="LRR 5">
    <location>
        <begin position="257"/>
        <end position="278"/>
    </location>
</feature>
<feature type="repeat" description="LRR 6">
    <location>
        <begin position="280"/>
        <end position="301"/>
    </location>
</feature>
<feature type="repeat" description="LRR 7">
    <location>
        <begin position="303"/>
        <end position="324"/>
    </location>
</feature>
<feature type="repeat" description="LRR 8">
    <location>
        <begin position="326"/>
        <end position="347"/>
    </location>
</feature>
<feature type="repeat" description="LRR 9">
    <location>
        <begin position="349"/>
        <end position="371"/>
    </location>
</feature>
<feature type="repeat" description="LRR 10">
    <location>
        <begin position="372"/>
        <end position="393"/>
    </location>
</feature>
<feature type="repeat" description="LRR 11">
    <location>
        <begin position="396"/>
        <end position="417"/>
    </location>
</feature>
<feature type="repeat" description="LRR 12">
    <location>
        <begin position="420"/>
        <end position="441"/>
    </location>
</feature>
<feature type="repeat" description="LRR 13">
    <location>
        <begin position="444"/>
        <end position="465"/>
    </location>
</feature>
<feature type="repeat" description="LRR 14">
    <location>
        <begin position="467"/>
        <end position="488"/>
    </location>
</feature>
<feature type="repeat" description="LRR 15">
    <location>
        <begin position="490"/>
        <end position="511"/>
    </location>
</feature>
<feature type="repeat" description="LRR 16">
    <location>
        <begin position="513"/>
        <end position="534"/>
    </location>
</feature>
<feature type="repeat" description="LRR 17">
    <location>
        <begin position="536"/>
        <end position="557"/>
    </location>
</feature>
<feature type="repeat" description="LRR 18">
    <location>
        <begin position="559"/>
        <end position="580"/>
    </location>
</feature>
<feature type="repeat" description="LRR 19">
    <location>
        <begin position="582"/>
        <end position="604"/>
    </location>
</feature>
<feature type="repeat" description="LRR 20">
    <location>
        <begin position="606"/>
        <end position="627"/>
    </location>
</feature>
<feature type="region of interest" description="Disordered" evidence="2">
    <location>
        <begin position="1"/>
        <end position="67"/>
    </location>
</feature>
<feature type="region of interest" description="Disordered" evidence="2">
    <location>
        <begin position="83"/>
        <end position="151"/>
    </location>
</feature>
<feature type="compositionally biased region" description="Low complexity" evidence="2">
    <location>
        <begin position="1"/>
        <end position="19"/>
    </location>
</feature>
<feature type="compositionally biased region" description="Gly residues" evidence="2">
    <location>
        <begin position="26"/>
        <end position="49"/>
    </location>
</feature>
<feature type="compositionally biased region" description="Gly residues" evidence="2">
    <location>
        <begin position="88"/>
        <end position="97"/>
    </location>
</feature>
<feature type="compositionally biased region" description="Low complexity" evidence="2">
    <location>
        <begin position="98"/>
        <end position="107"/>
    </location>
</feature>
<sequence length="645" mass="69717">MNLCSSGATASTTSLSSTGQAERSGGVPGGGAEGGGGDGGSGNSGGGGSKTNDGSTEAPTLCFAGGSGTAGAIVGSAELSNANSPANGAGGASGSTGSGQQPTGSNGHSHLHNENNANMPPETRPKMVTVKHPESNKPKPTTKKSKPIQADQDVIKALQRCRDEGIKRLDLSKSSITVIPSTVKECVHLTELYLYSNKIGQLPPEIGCLVSLRNLALNENSLTSLPESLQNCSQLKVLDLRHNKLAEIPPVIYRLRSLTTLYLRFNRITAVADDLRQLVNLTMLSLRENKIRELGSAIGALVNLTTLDVSHNHLEHLPEDIGNCVNLSALDLQHNELLDIPDSIGNLKSLVRLGMRYNRLSSVPATLKNCKSMDEFNVEGNGITQLPDGMLASLSGLTTITLSRNQFASYPTGGPAQFTNVYSINLEHNRIDKIPYGIFSRAKGLTKLNMKENMLTALPLDIGTWVNMVELNLATNALQKLPDDIMNLQNLEILILSNNMLKKIPNTIGNLRRLRILDLEENRIEVLPHEIGLLHELQRLILQTNQITMLPRSIGHLGNLTHLSVSENNLQFLPEEIGSLESLENLYINQNPGLEKLPFELALCQNLKYLNIDKCPLSTIPPEIQAGGPSLVLQWLKMHSPYRQM</sequence>
<organism>
    <name type="scientific">Drosophila yakuba</name>
    <name type="common">Fruit fly</name>
    <dbReference type="NCBI Taxonomy" id="7245"/>
    <lineage>
        <taxon>Eukaryota</taxon>
        <taxon>Metazoa</taxon>
        <taxon>Ecdysozoa</taxon>
        <taxon>Arthropoda</taxon>
        <taxon>Hexapoda</taxon>
        <taxon>Insecta</taxon>
        <taxon>Pterygota</taxon>
        <taxon>Neoptera</taxon>
        <taxon>Endopterygota</taxon>
        <taxon>Diptera</taxon>
        <taxon>Brachycera</taxon>
        <taxon>Muscomorpha</taxon>
        <taxon>Ephydroidea</taxon>
        <taxon>Drosophilidae</taxon>
        <taxon>Drosophila</taxon>
        <taxon>Sophophora</taxon>
    </lineage>
</organism>